<evidence type="ECO:0000255" key="1">
    <source>
        <dbReference type="HAMAP-Rule" id="MF_00009"/>
    </source>
</evidence>
<protein>
    <recommendedName>
        <fullName evidence="1">Endoribonuclease YbeY</fullName>
        <ecNumber evidence="1">3.1.-.-</ecNumber>
    </recommendedName>
</protein>
<organism>
    <name type="scientific">Flavobacterium psychrophilum (strain ATCC 49511 / DSM 21280 / CIP 103535 / JIP02/86)</name>
    <dbReference type="NCBI Taxonomy" id="402612"/>
    <lineage>
        <taxon>Bacteria</taxon>
        <taxon>Pseudomonadati</taxon>
        <taxon>Bacteroidota</taxon>
        <taxon>Flavobacteriia</taxon>
        <taxon>Flavobacteriales</taxon>
        <taxon>Flavobacteriaceae</taxon>
        <taxon>Flavobacterium</taxon>
    </lineage>
</organism>
<gene>
    <name evidence="1" type="primary">ybeY</name>
    <name type="ordered locus">FP0002</name>
</gene>
<accession>A6GVJ9</accession>
<feature type="chain" id="PRO_0000321775" description="Endoribonuclease YbeY">
    <location>
        <begin position="1"/>
        <end position="140"/>
    </location>
</feature>
<feature type="binding site" evidence="1">
    <location>
        <position position="105"/>
    </location>
    <ligand>
        <name>Zn(2+)</name>
        <dbReference type="ChEBI" id="CHEBI:29105"/>
        <note>catalytic</note>
    </ligand>
</feature>
<feature type="binding site" evidence="1">
    <location>
        <position position="109"/>
    </location>
    <ligand>
        <name>Zn(2+)</name>
        <dbReference type="ChEBI" id="CHEBI:29105"/>
        <note>catalytic</note>
    </ligand>
</feature>
<feature type="binding site" evidence="1">
    <location>
        <position position="115"/>
    </location>
    <ligand>
        <name>Zn(2+)</name>
        <dbReference type="ChEBI" id="CHEBI:29105"/>
        <note>catalytic</note>
    </ligand>
</feature>
<comment type="function">
    <text evidence="1">Single strand-specific metallo-endoribonuclease involved in late-stage 70S ribosome quality control and in maturation of the 3' terminus of the 16S rRNA.</text>
</comment>
<comment type="cofactor">
    <cofactor evidence="1">
        <name>Zn(2+)</name>
        <dbReference type="ChEBI" id="CHEBI:29105"/>
    </cofactor>
    <text evidence="1">Binds 1 zinc ion.</text>
</comment>
<comment type="subcellular location">
    <subcellularLocation>
        <location evidence="1">Cytoplasm</location>
    </subcellularLocation>
</comment>
<comment type="similarity">
    <text evidence="1">Belongs to the endoribonuclease YbeY family.</text>
</comment>
<keyword id="KW-0963">Cytoplasm</keyword>
<keyword id="KW-0255">Endonuclease</keyword>
<keyword id="KW-0378">Hydrolase</keyword>
<keyword id="KW-0479">Metal-binding</keyword>
<keyword id="KW-0540">Nuclease</keyword>
<keyword id="KW-1185">Reference proteome</keyword>
<keyword id="KW-0690">Ribosome biogenesis</keyword>
<keyword id="KW-0698">rRNA processing</keyword>
<keyword id="KW-0862">Zinc</keyword>
<name>YBEY_FLAPJ</name>
<dbReference type="EC" id="3.1.-.-" evidence="1"/>
<dbReference type="EMBL" id="AM398681">
    <property type="protein sequence ID" value="CAL42121.1"/>
    <property type="molecule type" value="Genomic_DNA"/>
</dbReference>
<dbReference type="RefSeq" id="WP_011962183.1">
    <property type="nucleotide sequence ID" value="NC_009613.3"/>
</dbReference>
<dbReference type="RefSeq" id="YP_001294942.1">
    <property type="nucleotide sequence ID" value="NC_009613.3"/>
</dbReference>
<dbReference type="SMR" id="A6GVJ9"/>
<dbReference type="STRING" id="402612.FP0002"/>
<dbReference type="EnsemblBacteria" id="CAL42121">
    <property type="protein sequence ID" value="CAL42121"/>
    <property type="gene ID" value="FP0002"/>
</dbReference>
<dbReference type="GeneID" id="66553613"/>
<dbReference type="KEGG" id="fps:FP0002"/>
<dbReference type="PATRIC" id="fig|402612.5.peg.2"/>
<dbReference type="eggNOG" id="COG0319">
    <property type="taxonomic scope" value="Bacteria"/>
</dbReference>
<dbReference type="HOGENOM" id="CLU_106710_3_3_10"/>
<dbReference type="OrthoDB" id="9811984at2"/>
<dbReference type="Proteomes" id="UP000006394">
    <property type="component" value="Chromosome"/>
</dbReference>
<dbReference type="GO" id="GO:0005737">
    <property type="term" value="C:cytoplasm"/>
    <property type="evidence" value="ECO:0007669"/>
    <property type="project" value="UniProtKB-SubCell"/>
</dbReference>
<dbReference type="GO" id="GO:0004222">
    <property type="term" value="F:metalloendopeptidase activity"/>
    <property type="evidence" value="ECO:0007669"/>
    <property type="project" value="InterPro"/>
</dbReference>
<dbReference type="GO" id="GO:0004521">
    <property type="term" value="F:RNA endonuclease activity"/>
    <property type="evidence" value="ECO:0007669"/>
    <property type="project" value="UniProtKB-UniRule"/>
</dbReference>
<dbReference type="GO" id="GO:0008270">
    <property type="term" value="F:zinc ion binding"/>
    <property type="evidence" value="ECO:0007669"/>
    <property type="project" value="UniProtKB-UniRule"/>
</dbReference>
<dbReference type="GO" id="GO:0006364">
    <property type="term" value="P:rRNA processing"/>
    <property type="evidence" value="ECO:0007669"/>
    <property type="project" value="UniProtKB-UniRule"/>
</dbReference>
<dbReference type="Gene3D" id="3.40.390.30">
    <property type="entry name" value="Metalloproteases ('zincins'), catalytic domain"/>
    <property type="match status" value="1"/>
</dbReference>
<dbReference type="HAMAP" id="MF_00009">
    <property type="entry name" value="Endoribonucl_YbeY"/>
    <property type="match status" value="1"/>
</dbReference>
<dbReference type="InterPro" id="IPR023091">
    <property type="entry name" value="MetalPrtase_cat_dom_sf_prd"/>
</dbReference>
<dbReference type="InterPro" id="IPR002036">
    <property type="entry name" value="YbeY"/>
</dbReference>
<dbReference type="NCBIfam" id="TIGR00043">
    <property type="entry name" value="rRNA maturation RNase YbeY"/>
    <property type="match status" value="1"/>
</dbReference>
<dbReference type="PANTHER" id="PTHR46986">
    <property type="entry name" value="ENDORIBONUCLEASE YBEY, CHLOROPLASTIC"/>
    <property type="match status" value="1"/>
</dbReference>
<dbReference type="PANTHER" id="PTHR46986:SF1">
    <property type="entry name" value="ENDORIBONUCLEASE YBEY, CHLOROPLASTIC"/>
    <property type="match status" value="1"/>
</dbReference>
<dbReference type="Pfam" id="PF02130">
    <property type="entry name" value="YbeY"/>
    <property type="match status" value="1"/>
</dbReference>
<dbReference type="SUPFAM" id="SSF55486">
    <property type="entry name" value="Metalloproteases ('zincins'), catalytic domain"/>
    <property type="match status" value="1"/>
</dbReference>
<reference key="1">
    <citation type="journal article" date="2007" name="Nat. Biotechnol.">
        <title>Complete genome sequence of the fish pathogen Flavobacterium psychrophilum.</title>
        <authorList>
            <person name="Duchaud E."/>
            <person name="Boussaha M."/>
            <person name="Loux V."/>
            <person name="Bernardet J.-F."/>
            <person name="Michel C."/>
            <person name="Kerouault B."/>
            <person name="Mondot S."/>
            <person name="Nicolas P."/>
            <person name="Bossy R."/>
            <person name="Caron C."/>
            <person name="Bessieres P."/>
            <person name="Gibrat J.-F."/>
            <person name="Claverol S."/>
            <person name="Dumetz F."/>
            <person name="Le Henaff M."/>
            <person name="Benmansour A."/>
        </authorList>
    </citation>
    <scope>NUCLEOTIDE SEQUENCE [LARGE SCALE GENOMIC DNA]</scope>
    <source>
        <strain>ATCC 49511 / DSM 21280 / CIP 103535 / JIP02/86</strain>
    </source>
</reference>
<proteinExistence type="inferred from homology"/>
<sequence length="140" mass="16662">MISFNYEIDFEIREETSYINWVSSVILSENKSEGEINYIFCDDNYLLEINQQYLNHDTLTDVISFDYSLGDEIHGDIYISIERVRENADDFKVPFEEELKRVMIHGVLHYCGYKDKSDADELLMRSKEDEKLKLFHVKQN</sequence>